<keyword id="KW-0067">ATP-binding</keyword>
<keyword id="KW-0963">Cytoplasm</keyword>
<keyword id="KW-0275">Fatty acid biosynthesis</keyword>
<keyword id="KW-0276">Fatty acid metabolism</keyword>
<keyword id="KW-0444">Lipid biosynthesis</keyword>
<keyword id="KW-0443">Lipid metabolism</keyword>
<keyword id="KW-0547">Nucleotide-binding</keyword>
<keyword id="KW-0808">Transferase</keyword>
<name>ACCA_STAHJ</name>
<reference key="1">
    <citation type="journal article" date="2005" name="J. Bacteriol.">
        <title>Whole-genome sequencing of Staphylococcus haemolyticus uncovers the extreme plasticity of its genome and the evolution of human-colonizing staphylococcal species.</title>
        <authorList>
            <person name="Takeuchi F."/>
            <person name="Watanabe S."/>
            <person name="Baba T."/>
            <person name="Yuzawa H."/>
            <person name="Ito T."/>
            <person name="Morimoto Y."/>
            <person name="Kuroda M."/>
            <person name="Cui L."/>
            <person name="Takahashi M."/>
            <person name="Ankai A."/>
            <person name="Baba S."/>
            <person name="Fukui S."/>
            <person name="Lee J.C."/>
            <person name="Hiramatsu K."/>
        </authorList>
    </citation>
    <scope>NUCLEOTIDE SEQUENCE [LARGE SCALE GENOMIC DNA]</scope>
    <source>
        <strain>JCSC1435</strain>
    </source>
</reference>
<accession>Q4L741</accession>
<dbReference type="EC" id="2.1.3.15" evidence="1"/>
<dbReference type="EMBL" id="AP006716">
    <property type="protein sequence ID" value="BAE04534.1"/>
    <property type="molecule type" value="Genomic_DNA"/>
</dbReference>
<dbReference type="RefSeq" id="WP_011275524.1">
    <property type="nucleotide sequence ID" value="NC_007168.1"/>
</dbReference>
<dbReference type="SMR" id="Q4L741"/>
<dbReference type="KEGG" id="sha:SH1225"/>
<dbReference type="eggNOG" id="COG0825">
    <property type="taxonomic scope" value="Bacteria"/>
</dbReference>
<dbReference type="HOGENOM" id="CLU_015486_0_2_9"/>
<dbReference type="OrthoDB" id="9808023at2"/>
<dbReference type="UniPathway" id="UPA00655">
    <property type="reaction ID" value="UER00711"/>
</dbReference>
<dbReference type="Proteomes" id="UP000000543">
    <property type="component" value="Chromosome"/>
</dbReference>
<dbReference type="GO" id="GO:0009317">
    <property type="term" value="C:acetyl-CoA carboxylase complex"/>
    <property type="evidence" value="ECO:0007669"/>
    <property type="project" value="InterPro"/>
</dbReference>
<dbReference type="GO" id="GO:0003989">
    <property type="term" value="F:acetyl-CoA carboxylase activity"/>
    <property type="evidence" value="ECO:0007669"/>
    <property type="project" value="InterPro"/>
</dbReference>
<dbReference type="GO" id="GO:0005524">
    <property type="term" value="F:ATP binding"/>
    <property type="evidence" value="ECO:0007669"/>
    <property type="project" value="UniProtKB-KW"/>
</dbReference>
<dbReference type="GO" id="GO:0016743">
    <property type="term" value="F:carboxyl- or carbamoyltransferase activity"/>
    <property type="evidence" value="ECO:0007669"/>
    <property type="project" value="UniProtKB-UniRule"/>
</dbReference>
<dbReference type="GO" id="GO:0006633">
    <property type="term" value="P:fatty acid biosynthetic process"/>
    <property type="evidence" value="ECO:0007669"/>
    <property type="project" value="UniProtKB-KW"/>
</dbReference>
<dbReference type="GO" id="GO:2001295">
    <property type="term" value="P:malonyl-CoA biosynthetic process"/>
    <property type="evidence" value="ECO:0007669"/>
    <property type="project" value="UniProtKB-UniRule"/>
</dbReference>
<dbReference type="Gene3D" id="3.90.226.10">
    <property type="entry name" value="2-enoyl-CoA Hydratase, Chain A, domain 1"/>
    <property type="match status" value="1"/>
</dbReference>
<dbReference type="HAMAP" id="MF_00823">
    <property type="entry name" value="AcetylCoA_CT_alpha"/>
    <property type="match status" value="1"/>
</dbReference>
<dbReference type="InterPro" id="IPR001095">
    <property type="entry name" value="Acetyl_CoA_COase_a_su"/>
</dbReference>
<dbReference type="InterPro" id="IPR029045">
    <property type="entry name" value="ClpP/crotonase-like_dom_sf"/>
</dbReference>
<dbReference type="InterPro" id="IPR011763">
    <property type="entry name" value="COA_CT_C"/>
</dbReference>
<dbReference type="NCBIfam" id="TIGR00513">
    <property type="entry name" value="accA"/>
    <property type="match status" value="1"/>
</dbReference>
<dbReference type="NCBIfam" id="NF041504">
    <property type="entry name" value="AccA_sub"/>
    <property type="match status" value="1"/>
</dbReference>
<dbReference type="NCBIfam" id="NF004344">
    <property type="entry name" value="PRK05724.1"/>
    <property type="match status" value="1"/>
</dbReference>
<dbReference type="PANTHER" id="PTHR42853">
    <property type="entry name" value="ACETYL-COENZYME A CARBOXYLASE CARBOXYL TRANSFERASE SUBUNIT ALPHA"/>
    <property type="match status" value="1"/>
</dbReference>
<dbReference type="PANTHER" id="PTHR42853:SF3">
    <property type="entry name" value="ACETYL-COENZYME A CARBOXYLASE CARBOXYL TRANSFERASE SUBUNIT ALPHA, CHLOROPLASTIC"/>
    <property type="match status" value="1"/>
</dbReference>
<dbReference type="Pfam" id="PF03255">
    <property type="entry name" value="ACCA"/>
    <property type="match status" value="1"/>
</dbReference>
<dbReference type="PRINTS" id="PR01069">
    <property type="entry name" value="ACCCTRFRASEA"/>
</dbReference>
<dbReference type="SUPFAM" id="SSF52096">
    <property type="entry name" value="ClpP/crotonase"/>
    <property type="match status" value="1"/>
</dbReference>
<dbReference type="PROSITE" id="PS50989">
    <property type="entry name" value="COA_CT_CTER"/>
    <property type="match status" value="1"/>
</dbReference>
<evidence type="ECO:0000255" key="1">
    <source>
        <dbReference type="HAMAP-Rule" id="MF_00823"/>
    </source>
</evidence>
<evidence type="ECO:0000255" key="2">
    <source>
        <dbReference type="PROSITE-ProRule" id="PRU01137"/>
    </source>
</evidence>
<gene>
    <name evidence="1" type="primary">accA</name>
    <name type="ordered locus">SH1225</name>
</gene>
<comment type="function">
    <text evidence="1">Component of the acetyl coenzyme A carboxylase (ACC) complex. First, biotin carboxylase catalyzes the carboxylation of biotin on its carrier protein (BCCP) and then the CO(2) group is transferred by the carboxyltransferase to acetyl-CoA to form malonyl-CoA.</text>
</comment>
<comment type="catalytic activity">
    <reaction evidence="1">
        <text>N(6)-carboxybiotinyl-L-lysyl-[protein] + acetyl-CoA = N(6)-biotinyl-L-lysyl-[protein] + malonyl-CoA</text>
        <dbReference type="Rhea" id="RHEA:54728"/>
        <dbReference type="Rhea" id="RHEA-COMP:10505"/>
        <dbReference type="Rhea" id="RHEA-COMP:10506"/>
        <dbReference type="ChEBI" id="CHEBI:57288"/>
        <dbReference type="ChEBI" id="CHEBI:57384"/>
        <dbReference type="ChEBI" id="CHEBI:83144"/>
        <dbReference type="ChEBI" id="CHEBI:83145"/>
        <dbReference type="EC" id="2.1.3.15"/>
    </reaction>
</comment>
<comment type="pathway">
    <text evidence="1">Lipid metabolism; malonyl-CoA biosynthesis; malonyl-CoA from acetyl-CoA: step 1/1.</text>
</comment>
<comment type="subunit">
    <text evidence="1">Acetyl-CoA carboxylase is a heterohexamer composed of biotin carboxyl carrier protein (AccB), biotin carboxylase (AccC) and two subunits each of ACCase subunit alpha (AccA) and ACCase subunit beta (AccD).</text>
</comment>
<comment type="subcellular location">
    <subcellularLocation>
        <location evidence="1">Cytoplasm</location>
    </subcellularLocation>
</comment>
<comment type="similarity">
    <text evidence="1">Belongs to the AccA family.</text>
</comment>
<protein>
    <recommendedName>
        <fullName evidence="1">Acetyl-coenzyme A carboxylase carboxyl transferase subunit alpha</fullName>
        <shortName evidence="1">ACCase subunit alpha</shortName>
        <shortName evidence="1">Acetyl-CoA carboxylase carboxyltransferase subunit alpha</shortName>
        <ecNumber evidence="1">2.1.3.15</ecNumber>
    </recommendedName>
</protein>
<sequence>MLDFEKPLFEIKNKIESLKQSQEKNDVDLQDEIDLLEASLERETKKIYTNLKPWDRVQIARLQERPTTLDYIPYIFDSFIELHGDRNFRDDPAMIGGIGYLNGTPVTVIGQQRGKDTKDNIYRNFGMAHPEGYRKALRLMKQAEKFNRPIFTFIDTKGAYPGKAAEERGQSESIARNLVEMASLKVPVIAIVIGEGGSGGALGIGIANRIMMLENSTYSVISPEGAAALLWKDSSLAKMAAETMKITAKDLHHLNVIDSVIDEPLGGAHNNIEQQAIDIKQAFVDQLEQLQQQSADELVEDRFNKFRNIGAFIEK</sequence>
<feature type="chain" id="PRO_0000223834" description="Acetyl-coenzyme A carboxylase carboxyl transferase subunit alpha">
    <location>
        <begin position="1"/>
        <end position="315"/>
    </location>
</feature>
<feature type="domain" description="CoA carboxyltransferase C-terminal" evidence="2">
    <location>
        <begin position="32"/>
        <end position="289"/>
    </location>
</feature>
<organism>
    <name type="scientific">Staphylococcus haemolyticus (strain JCSC1435)</name>
    <dbReference type="NCBI Taxonomy" id="279808"/>
    <lineage>
        <taxon>Bacteria</taxon>
        <taxon>Bacillati</taxon>
        <taxon>Bacillota</taxon>
        <taxon>Bacilli</taxon>
        <taxon>Bacillales</taxon>
        <taxon>Staphylococcaceae</taxon>
        <taxon>Staphylococcus</taxon>
    </lineage>
</organism>
<proteinExistence type="inferred from homology"/>